<accession>B7N7Q0</accession>
<reference key="1">
    <citation type="journal article" date="2009" name="PLoS Genet.">
        <title>Organised genome dynamics in the Escherichia coli species results in highly diverse adaptive paths.</title>
        <authorList>
            <person name="Touchon M."/>
            <person name="Hoede C."/>
            <person name="Tenaillon O."/>
            <person name="Barbe V."/>
            <person name="Baeriswyl S."/>
            <person name="Bidet P."/>
            <person name="Bingen E."/>
            <person name="Bonacorsi S."/>
            <person name="Bouchier C."/>
            <person name="Bouvet O."/>
            <person name="Calteau A."/>
            <person name="Chiapello H."/>
            <person name="Clermont O."/>
            <person name="Cruveiller S."/>
            <person name="Danchin A."/>
            <person name="Diard M."/>
            <person name="Dossat C."/>
            <person name="Karoui M.E."/>
            <person name="Frapy E."/>
            <person name="Garry L."/>
            <person name="Ghigo J.M."/>
            <person name="Gilles A.M."/>
            <person name="Johnson J."/>
            <person name="Le Bouguenec C."/>
            <person name="Lescat M."/>
            <person name="Mangenot S."/>
            <person name="Martinez-Jehanne V."/>
            <person name="Matic I."/>
            <person name="Nassif X."/>
            <person name="Oztas S."/>
            <person name="Petit M.A."/>
            <person name="Pichon C."/>
            <person name="Rouy Z."/>
            <person name="Ruf C.S."/>
            <person name="Schneider D."/>
            <person name="Tourret J."/>
            <person name="Vacherie B."/>
            <person name="Vallenet D."/>
            <person name="Medigue C."/>
            <person name="Rocha E.P.C."/>
            <person name="Denamur E."/>
        </authorList>
    </citation>
    <scope>NUCLEOTIDE SEQUENCE [LARGE SCALE GENOMIC DNA]</scope>
    <source>
        <strain>UMN026 / ExPEC</strain>
    </source>
</reference>
<proteinExistence type="inferred from homology"/>
<name>SYI_ECOLU</name>
<evidence type="ECO:0000255" key="1">
    <source>
        <dbReference type="HAMAP-Rule" id="MF_02002"/>
    </source>
</evidence>
<feature type="chain" id="PRO_1000189161" description="Isoleucine--tRNA ligase">
    <location>
        <begin position="1"/>
        <end position="938"/>
    </location>
</feature>
<feature type="short sequence motif" description="'HIGH' region">
    <location>
        <begin position="58"/>
        <end position="68"/>
    </location>
</feature>
<feature type="short sequence motif" description="'KMSKS' region">
    <location>
        <begin position="602"/>
        <end position="606"/>
    </location>
</feature>
<feature type="binding site" evidence="1">
    <location>
        <position position="561"/>
    </location>
    <ligand>
        <name>L-isoleucyl-5'-AMP</name>
        <dbReference type="ChEBI" id="CHEBI:178002"/>
    </ligand>
</feature>
<feature type="binding site" evidence="1">
    <location>
        <position position="605"/>
    </location>
    <ligand>
        <name>ATP</name>
        <dbReference type="ChEBI" id="CHEBI:30616"/>
    </ligand>
</feature>
<feature type="binding site" evidence="1">
    <location>
        <position position="901"/>
    </location>
    <ligand>
        <name>Zn(2+)</name>
        <dbReference type="ChEBI" id="CHEBI:29105"/>
    </ligand>
</feature>
<feature type="binding site" evidence="1">
    <location>
        <position position="904"/>
    </location>
    <ligand>
        <name>Zn(2+)</name>
        <dbReference type="ChEBI" id="CHEBI:29105"/>
    </ligand>
</feature>
<feature type="binding site" evidence="1">
    <location>
        <position position="921"/>
    </location>
    <ligand>
        <name>Zn(2+)</name>
        <dbReference type="ChEBI" id="CHEBI:29105"/>
    </ligand>
</feature>
<feature type="binding site" evidence="1">
    <location>
        <position position="924"/>
    </location>
    <ligand>
        <name>Zn(2+)</name>
        <dbReference type="ChEBI" id="CHEBI:29105"/>
    </ligand>
</feature>
<feature type="modified residue" description="N6-acetyllysine" evidence="1">
    <location>
        <position position="183"/>
    </location>
</feature>
<dbReference type="EC" id="6.1.1.5" evidence="1"/>
<dbReference type="EMBL" id="CU928163">
    <property type="protein sequence ID" value="CAR11250.1"/>
    <property type="molecule type" value="Genomic_DNA"/>
</dbReference>
<dbReference type="RefSeq" id="WP_001286869.1">
    <property type="nucleotide sequence ID" value="NC_011751.1"/>
</dbReference>
<dbReference type="RefSeq" id="YP_002410805.1">
    <property type="nucleotide sequence ID" value="NC_011751.1"/>
</dbReference>
<dbReference type="SMR" id="B7N7Q0"/>
<dbReference type="STRING" id="585056.ECUMN_0026"/>
<dbReference type="KEGG" id="eum:ECUMN_0026"/>
<dbReference type="PATRIC" id="fig|585056.7.peg.210"/>
<dbReference type="HOGENOM" id="CLU_001493_7_1_6"/>
<dbReference type="Proteomes" id="UP000007097">
    <property type="component" value="Chromosome"/>
</dbReference>
<dbReference type="GO" id="GO:0005829">
    <property type="term" value="C:cytosol"/>
    <property type="evidence" value="ECO:0007669"/>
    <property type="project" value="TreeGrafter"/>
</dbReference>
<dbReference type="GO" id="GO:0002161">
    <property type="term" value="F:aminoacyl-tRNA deacylase activity"/>
    <property type="evidence" value="ECO:0007669"/>
    <property type="project" value="InterPro"/>
</dbReference>
<dbReference type="GO" id="GO:0005524">
    <property type="term" value="F:ATP binding"/>
    <property type="evidence" value="ECO:0007669"/>
    <property type="project" value="UniProtKB-UniRule"/>
</dbReference>
<dbReference type="GO" id="GO:0004822">
    <property type="term" value="F:isoleucine-tRNA ligase activity"/>
    <property type="evidence" value="ECO:0007669"/>
    <property type="project" value="UniProtKB-UniRule"/>
</dbReference>
<dbReference type="GO" id="GO:0000049">
    <property type="term" value="F:tRNA binding"/>
    <property type="evidence" value="ECO:0007669"/>
    <property type="project" value="InterPro"/>
</dbReference>
<dbReference type="GO" id="GO:0008270">
    <property type="term" value="F:zinc ion binding"/>
    <property type="evidence" value="ECO:0007669"/>
    <property type="project" value="UniProtKB-UniRule"/>
</dbReference>
<dbReference type="GO" id="GO:0006428">
    <property type="term" value="P:isoleucyl-tRNA aminoacylation"/>
    <property type="evidence" value="ECO:0007669"/>
    <property type="project" value="UniProtKB-UniRule"/>
</dbReference>
<dbReference type="CDD" id="cd07960">
    <property type="entry name" value="Anticodon_Ia_Ile_BEm"/>
    <property type="match status" value="1"/>
</dbReference>
<dbReference type="CDD" id="cd00818">
    <property type="entry name" value="IleRS_core"/>
    <property type="match status" value="1"/>
</dbReference>
<dbReference type="FunFam" id="1.10.730.20:FF:000001">
    <property type="entry name" value="Isoleucine--tRNA ligase"/>
    <property type="match status" value="1"/>
</dbReference>
<dbReference type="FunFam" id="3.40.50.620:FF:000042">
    <property type="entry name" value="Isoleucine--tRNA ligase"/>
    <property type="match status" value="1"/>
</dbReference>
<dbReference type="FunFam" id="3.40.50.620:FF:000048">
    <property type="entry name" value="Isoleucine--tRNA ligase"/>
    <property type="match status" value="1"/>
</dbReference>
<dbReference type="FunFam" id="3.90.740.10:FF:000002">
    <property type="entry name" value="Isoleucine--tRNA ligase"/>
    <property type="match status" value="1"/>
</dbReference>
<dbReference type="Gene3D" id="1.10.730.20">
    <property type="match status" value="1"/>
</dbReference>
<dbReference type="Gene3D" id="3.40.50.620">
    <property type="entry name" value="HUPs"/>
    <property type="match status" value="2"/>
</dbReference>
<dbReference type="Gene3D" id="3.90.740.10">
    <property type="entry name" value="Valyl/Leucyl/Isoleucyl-tRNA synthetase, editing domain"/>
    <property type="match status" value="1"/>
</dbReference>
<dbReference type="HAMAP" id="MF_02002">
    <property type="entry name" value="Ile_tRNA_synth_type1"/>
    <property type="match status" value="1"/>
</dbReference>
<dbReference type="InterPro" id="IPR001412">
    <property type="entry name" value="aa-tRNA-synth_I_CS"/>
</dbReference>
<dbReference type="InterPro" id="IPR002300">
    <property type="entry name" value="aa-tRNA-synth_Ia"/>
</dbReference>
<dbReference type="InterPro" id="IPR033708">
    <property type="entry name" value="Anticodon_Ile_BEm"/>
</dbReference>
<dbReference type="InterPro" id="IPR002301">
    <property type="entry name" value="Ile-tRNA-ligase"/>
</dbReference>
<dbReference type="InterPro" id="IPR023585">
    <property type="entry name" value="Ile-tRNA-ligase_type1"/>
</dbReference>
<dbReference type="InterPro" id="IPR050081">
    <property type="entry name" value="Ile-tRNA_ligase"/>
</dbReference>
<dbReference type="InterPro" id="IPR013155">
    <property type="entry name" value="M/V/L/I-tRNA-synth_anticd-bd"/>
</dbReference>
<dbReference type="InterPro" id="IPR014729">
    <property type="entry name" value="Rossmann-like_a/b/a_fold"/>
</dbReference>
<dbReference type="InterPro" id="IPR009080">
    <property type="entry name" value="tRNAsynth_Ia_anticodon-bd"/>
</dbReference>
<dbReference type="InterPro" id="IPR009008">
    <property type="entry name" value="Val/Leu/Ile-tRNA-synth_edit"/>
</dbReference>
<dbReference type="InterPro" id="IPR010663">
    <property type="entry name" value="Znf_FPG/IleRS"/>
</dbReference>
<dbReference type="NCBIfam" id="TIGR00392">
    <property type="entry name" value="ileS"/>
    <property type="match status" value="1"/>
</dbReference>
<dbReference type="PANTHER" id="PTHR42765:SF1">
    <property type="entry name" value="ISOLEUCINE--TRNA LIGASE, MITOCHONDRIAL"/>
    <property type="match status" value="1"/>
</dbReference>
<dbReference type="PANTHER" id="PTHR42765">
    <property type="entry name" value="SOLEUCYL-TRNA SYNTHETASE"/>
    <property type="match status" value="1"/>
</dbReference>
<dbReference type="Pfam" id="PF08264">
    <property type="entry name" value="Anticodon_1"/>
    <property type="match status" value="1"/>
</dbReference>
<dbReference type="Pfam" id="PF00133">
    <property type="entry name" value="tRNA-synt_1"/>
    <property type="match status" value="1"/>
</dbReference>
<dbReference type="Pfam" id="PF06827">
    <property type="entry name" value="zf-FPG_IleRS"/>
    <property type="match status" value="1"/>
</dbReference>
<dbReference type="PRINTS" id="PR00984">
    <property type="entry name" value="TRNASYNTHILE"/>
</dbReference>
<dbReference type="SUPFAM" id="SSF47323">
    <property type="entry name" value="Anticodon-binding domain of a subclass of class I aminoacyl-tRNA synthetases"/>
    <property type="match status" value="1"/>
</dbReference>
<dbReference type="SUPFAM" id="SSF52374">
    <property type="entry name" value="Nucleotidylyl transferase"/>
    <property type="match status" value="1"/>
</dbReference>
<dbReference type="SUPFAM" id="SSF50677">
    <property type="entry name" value="ValRS/IleRS/LeuRS editing domain"/>
    <property type="match status" value="1"/>
</dbReference>
<dbReference type="PROSITE" id="PS00178">
    <property type="entry name" value="AA_TRNA_LIGASE_I"/>
    <property type="match status" value="1"/>
</dbReference>
<organism>
    <name type="scientific">Escherichia coli O17:K52:H18 (strain UMN026 / ExPEC)</name>
    <dbReference type="NCBI Taxonomy" id="585056"/>
    <lineage>
        <taxon>Bacteria</taxon>
        <taxon>Pseudomonadati</taxon>
        <taxon>Pseudomonadota</taxon>
        <taxon>Gammaproteobacteria</taxon>
        <taxon>Enterobacterales</taxon>
        <taxon>Enterobacteriaceae</taxon>
        <taxon>Escherichia</taxon>
    </lineage>
</organism>
<comment type="function">
    <text evidence="1">Catalyzes the attachment of isoleucine to tRNA(Ile). As IleRS can inadvertently accommodate and process structurally similar amino acids such as valine, to avoid such errors it has two additional distinct tRNA(Ile)-dependent editing activities. One activity is designated as 'pretransfer' editing and involves the hydrolysis of activated Val-AMP. The other activity is designated 'posttransfer' editing and involves deacylation of mischarged Val-tRNA(Ile).</text>
</comment>
<comment type="catalytic activity">
    <reaction evidence="1">
        <text>tRNA(Ile) + L-isoleucine + ATP = L-isoleucyl-tRNA(Ile) + AMP + diphosphate</text>
        <dbReference type="Rhea" id="RHEA:11060"/>
        <dbReference type="Rhea" id="RHEA-COMP:9666"/>
        <dbReference type="Rhea" id="RHEA-COMP:9695"/>
        <dbReference type="ChEBI" id="CHEBI:30616"/>
        <dbReference type="ChEBI" id="CHEBI:33019"/>
        <dbReference type="ChEBI" id="CHEBI:58045"/>
        <dbReference type="ChEBI" id="CHEBI:78442"/>
        <dbReference type="ChEBI" id="CHEBI:78528"/>
        <dbReference type="ChEBI" id="CHEBI:456215"/>
        <dbReference type="EC" id="6.1.1.5"/>
    </reaction>
</comment>
<comment type="cofactor">
    <cofactor evidence="1">
        <name>Zn(2+)</name>
        <dbReference type="ChEBI" id="CHEBI:29105"/>
    </cofactor>
    <text evidence="1">Binds 1 zinc ion per subunit.</text>
</comment>
<comment type="subunit">
    <text evidence="1">Monomer.</text>
</comment>
<comment type="subcellular location">
    <subcellularLocation>
        <location evidence="1">Cytoplasm</location>
    </subcellularLocation>
</comment>
<comment type="domain">
    <text evidence="1">IleRS has two distinct active sites: one for aminoacylation and one for editing. The misactivated valine is translocated from the active site to the editing site, which sterically excludes the correctly activated isoleucine. The single editing site contains two valyl binding pockets, one specific for each substrate (Val-AMP or Val-tRNA(Ile)).</text>
</comment>
<comment type="similarity">
    <text evidence="1">Belongs to the class-I aminoacyl-tRNA synthetase family. IleS type 1 subfamily.</text>
</comment>
<keyword id="KW-0007">Acetylation</keyword>
<keyword id="KW-0030">Aminoacyl-tRNA synthetase</keyword>
<keyword id="KW-0067">ATP-binding</keyword>
<keyword id="KW-0963">Cytoplasm</keyword>
<keyword id="KW-0436">Ligase</keyword>
<keyword id="KW-0479">Metal-binding</keyword>
<keyword id="KW-0547">Nucleotide-binding</keyword>
<keyword id="KW-0648">Protein biosynthesis</keyword>
<keyword id="KW-0862">Zinc</keyword>
<gene>
    <name evidence="1" type="primary">ileS</name>
    <name type="ordered locus">ECUMN_0026</name>
</gene>
<protein>
    <recommendedName>
        <fullName evidence="1">Isoleucine--tRNA ligase</fullName>
        <ecNumber evidence="1">6.1.1.5</ecNumber>
    </recommendedName>
    <alternativeName>
        <fullName evidence="1">Isoleucyl-tRNA synthetase</fullName>
        <shortName evidence="1">IleRS</shortName>
    </alternativeName>
</protein>
<sequence>MSDYKSTLNLPETGFPMRGDLAKREPGMLARWTDDDLYGIIRAAKKGKKTFILHDGPPYANGSIHIGHSVNKILKDIIVKSKGLSGYDSPYVPGWDCHGLPIELKVEQEYGKPGEKFTAAEFRAKCREYAATQVDGQRKDFIRLGVLGDWSHPYLTMDFKTEANIIRALGKIIGNGHLHKGAKPVHWCVDCRSALAEAEVEYYDKTSPSIDVAFQAVDQDALKAKFAVSNVNGPISLVIWTTTPWTLPANRAISIAPDFDYALVQIDGQAVILAKDLVESVMQRIGVTDYTILGTVKGAELELLRFTHPFMGFDVPAILGDHVTLDAGTGAVHTAPGHGPDDYVIGQKYGLETANPVGPDGTYLPGTYPTLDGVNVFKANDIVVALLQEKGALLHVEKMQHSYPCCWRHKTPIIFRATPQWFVSMDQKGLRAQSLKEIKGVQWIPDWGQARIESMVANRPDWCISRQRTWGVPMSLFVHKDTEELHPRTLELMEEVAKRVEVDGIQAWWDLDAKELLGDEADQYVKVPDTLDVWFDSGSTHSSVVDVRPEFAGHAADMYLEGSDQHRGWFMSSLMISTAMKGKAPYRQVLTHGFTVDGQGRKMSKSIGNTVSPQDVMNKLGADILRLWVASTDYTGEMAVSDEILKRAADSYRRIRNTARFLLANLNGFDPAKDMVKPEEMVVLDRWAVGCAKAAQEDILKAYEAYDFHEVVQRLMRFCSVEMGSFYLDIIKDRQYTAKADSVARRSCQTALYHIAEALVRWMAPILSFTADEVWGYLPGEREKYVFTGEWYEGLFGLADSEAMNDAFWDELLKVRGEVNKVIEQARADKKVGGSLEAAVTLFAEPELAAKLTALGDELRFVLLTSGATVADYNDAPADAQQSEVLKGLKVALSKAEGEKCPRCWHYTQDVGKVAEHAEICGRCVSNVAGDGEKRKFA</sequence>